<feature type="chain" id="PRO_0000187925" description="DNA repair protein RadA">
    <location>
        <begin position="1"/>
        <end position="454"/>
    </location>
</feature>
<feature type="zinc finger region" description="C4-type" evidence="1">
    <location>
        <begin position="11"/>
        <end position="28"/>
    </location>
</feature>
<feature type="region of interest" description="Lon-protease-like" evidence="1">
    <location>
        <begin position="350"/>
        <end position="454"/>
    </location>
</feature>
<feature type="short sequence motif" description="RadA KNRFG motif" evidence="1">
    <location>
        <begin position="251"/>
        <end position="255"/>
    </location>
</feature>
<feature type="binding site" evidence="1">
    <location>
        <begin position="94"/>
        <end position="101"/>
    </location>
    <ligand>
        <name>ATP</name>
        <dbReference type="ChEBI" id="CHEBI:30616"/>
    </ligand>
</feature>
<accession>O84300</accession>
<proteinExistence type="inferred from homology"/>
<gene>
    <name evidence="1" type="primary">radA</name>
    <name type="ordered locus">CT_298</name>
</gene>
<organism>
    <name type="scientific">Chlamydia trachomatis serovar D (strain ATCC VR-885 / DSM 19411 / UW-3/Cx)</name>
    <dbReference type="NCBI Taxonomy" id="272561"/>
    <lineage>
        <taxon>Bacteria</taxon>
        <taxon>Pseudomonadati</taxon>
        <taxon>Chlamydiota</taxon>
        <taxon>Chlamydiia</taxon>
        <taxon>Chlamydiales</taxon>
        <taxon>Chlamydiaceae</taxon>
        <taxon>Chlamydia/Chlamydophila group</taxon>
        <taxon>Chlamydia</taxon>
    </lineage>
</organism>
<reference key="1">
    <citation type="journal article" date="1998" name="Science">
        <title>Genome sequence of an obligate intracellular pathogen of humans: Chlamydia trachomatis.</title>
        <authorList>
            <person name="Stephens R.S."/>
            <person name="Kalman S."/>
            <person name="Lammel C.J."/>
            <person name="Fan J."/>
            <person name="Marathe R."/>
            <person name="Aravind L."/>
            <person name="Mitchell W.P."/>
            <person name="Olinger L."/>
            <person name="Tatusov R.L."/>
            <person name="Zhao Q."/>
            <person name="Koonin E.V."/>
            <person name="Davis R.W."/>
        </authorList>
    </citation>
    <scope>NUCLEOTIDE SEQUENCE [LARGE SCALE GENOMIC DNA]</scope>
    <source>
        <strain>ATCC VR-885 / DSM 19411 / UW-3/Cx</strain>
    </source>
</reference>
<keyword id="KW-0067">ATP-binding</keyword>
<keyword id="KW-0227">DNA damage</keyword>
<keyword id="KW-0234">DNA repair</keyword>
<keyword id="KW-0238">DNA-binding</keyword>
<keyword id="KW-0378">Hydrolase</keyword>
<keyword id="KW-0479">Metal-binding</keyword>
<keyword id="KW-0547">Nucleotide-binding</keyword>
<keyword id="KW-1185">Reference proteome</keyword>
<keyword id="KW-0346">Stress response</keyword>
<keyword id="KW-0862">Zinc</keyword>
<keyword id="KW-0863">Zinc-finger</keyword>
<sequence length="454" mass="49783">MTTKIKTQWTCTECGTHSPKWLGQCSGCLQWNTLVEERTAPKLNTSSYSSSSSIPIPLNNVEFQEEIRIHTQAQGWNRLLGGGTVRGSLALLGGEPGIGKSTLLLQISSQFAAAGHKVLYVCGEESVSQTSLRAQRLQISSNNIFLFPETNLEDIKQQIDNIAPDILVIDSIQIIFSPSLSSAPGSVAQVRETTAELMHIAKQKQITTFIIGHVTKSGEIAGPRILEHLVDTVLYFEGNAHANYRMIRSVKNRFGPTNELLILSMHTDGLREVENPSGLFLQEKIVETTGSTIIPIVEGSETLLIEVQALVSSSPFSNPVRKTSGFDPNRFSLLLAVLEKRANVKLYTSDVFLSIAGGLKITQPSADLGAVLSVVSSLYNRYLPKNYTYTGEIGLGGEIRHVSHMEHRIKESIIMGFKGIVMPFGQIKGLPKEFLDQIDIIGVKTIKDAVRLLQ</sequence>
<dbReference type="EC" id="3.6.4.-" evidence="1"/>
<dbReference type="EMBL" id="AE001273">
    <property type="protein sequence ID" value="AAC67891.1"/>
    <property type="molecule type" value="Genomic_DNA"/>
</dbReference>
<dbReference type="PIR" id="D71532">
    <property type="entry name" value="D71532"/>
</dbReference>
<dbReference type="RefSeq" id="NP_219803.1">
    <property type="nucleotide sequence ID" value="NC_000117.1"/>
</dbReference>
<dbReference type="RefSeq" id="WP_009871646.1">
    <property type="nucleotide sequence ID" value="NC_000117.1"/>
</dbReference>
<dbReference type="SMR" id="O84300"/>
<dbReference type="FunCoup" id="O84300">
    <property type="interactions" value="200"/>
</dbReference>
<dbReference type="STRING" id="272561.CT_298"/>
<dbReference type="EnsemblBacteria" id="AAC67891">
    <property type="protein sequence ID" value="AAC67891"/>
    <property type="gene ID" value="CT_298"/>
</dbReference>
<dbReference type="GeneID" id="884816"/>
<dbReference type="KEGG" id="ctr:CT_298"/>
<dbReference type="PATRIC" id="fig|272561.5.peg.320"/>
<dbReference type="HOGENOM" id="CLU_018264_0_1_0"/>
<dbReference type="InParanoid" id="O84300"/>
<dbReference type="OrthoDB" id="9803906at2"/>
<dbReference type="Proteomes" id="UP000000431">
    <property type="component" value="Chromosome"/>
</dbReference>
<dbReference type="GO" id="GO:0005524">
    <property type="term" value="F:ATP binding"/>
    <property type="evidence" value="ECO:0007669"/>
    <property type="project" value="UniProtKB-UniRule"/>
</dbReference>
<dbReference type="GO" id="GO:0016887">
    <property type="term" value="F:ATP hydrolysis activity"/>
    <property type="evidence" value="ECO:0007669"/>
    <property type="project" value="InterPro"/>
</dbReference>
<dbReference type="GO" id="GO:0140664">
    <property type="term" value="F:ATP-dependent DNA damage sensor activity"/>
    <property type="evidence" value="ECO:0007669"/>
    <property type="project" value="InterPro"/>
</dbReference>
<dbReference type="GO" id="GO:0003684">
    <property type="term" value="F:damaged DNA binding"/>
    <property type="evidence" value="ECO:0007669"/>
    <property type="project" value="InterPro"/>
</dbReference>
<dbReference type="GO" id="GO:0008270">
    <property type="term" value="F:zinc ion binding"/>
    <property type="evidence" value="ECO:0007669"/>
    <property type="project" value="UniProtKB-KW"/>
</dbReference>
<dbReference type="GO" id="GO:0000725">
    <property type="term" value="P:recombinational repair"/>
    <property type="evidence" value="ECO:0000318"/>
    <property type="project" value="GO_Central"/>
</dbReference>
<dbReference type="CDD" id="cd01121">
    <property type="entry name" value="RadA_SMS_N"/>
    <property type="match status" value="1"/>
</dbReference>
<dbReference type="FunFam" id="3.30.230.10:FF:000163">
    <property type="entry name" value="DNA repair protein RadA"/>
    <property type="match status" value="1"/>
</dbReference>
<dbReference type="FunFam" id="3.40.50.300:FF:000050">
    <property type="entry name" value="DNA repair protein RadA"/>
    <property type="match status" value="1"/>
</dbReference>
<dbReference type="Gene3D" id="3.30.230.10">
    <property type="match status" value="1"/>
</dbReference>
<dbReference type="Gene3D" id="3.40.50.300">
    <property type="entry name" value="P-loop containing nucleotide triphosphate hydrolases"/>
    <property type="match status" value="1"/>
</dbReference>
<dbReference type="HAMAP" id="MF_01498">
    <property type="entry name" value="RadA_bact"/>
    <property type="match status" value="1"/>
</dbReference>
<dbReference type="InterPro" id="IPR003593">
    <property type="entry name" value="AAA+_ATPase"/>
</dbReference>
<dbReference type="InterPro" id="IPR004504">
    <property type="entry name" value="DNA_repair_RadA"/>
</dbReference>
<dbReference type="InterPro" id="IPR027417">
    <property type="entry name" value="P-loop_NTPase"/>
</dbReference>
<dbReference type="InterPro" id="IPR020588">
    <property type="entry name" value="RecA_ATP-bd"/>
</dbReference>
<dbReference type="InterPro" id="IPR020568">
    <property type="entry name" value="Ribosomal_Su5_D2-typ_SF"/>
</dbReference>
<dbReference type="InterPro" id="IPR014721">
    <property type="entry name" value="Ribsml_uS5_D2-typ_fold_subgr"/>
</dbReference>
<dbReference type="InterPro" id="IPR041166">
    <property type="entry name" value="Rubredoxin_2"/>
</dbReference>
<dbReference type="NCBIfam" id="TIGR00416">
    <property type="entry name" value="sms"/>
    <property type="match status" value="1"/>
</dbReference>
<dbReference type="PANTHER" id="PTHR32472">
    <property type="entry name" value="DNA REPAIR PROTEIN RADA"/>
    <property type="match status" value="1"/>
</dbReference>
<dbReference type="PANTHER" id="PTHR32472:SF10">
    <property type="entry name" value="DNA REPAIR PROTEIN RADA-LIKE PROTEIN"/>
    <property type="match status" value="1"/>
</dbReference>
<dbReference type="Pfam" id="PF13481">
    <property type="entry name" value="AAA_25"/>
    <property type="match status" value="1"/>
</dbReference>
<dbReference type="Pfam" id="PF18073">
    <property type="entry name" value="Zn_ribbon_LapB"/>
    <property type="match status" value="1"/>
</dbReference>
<dbReference type="PRINTS" id="PR01874">
    <property type="entry name" value="DNAREPAIRADA"/>
</dbReference>
<dbReference type="SMART" id="SM00382">
    <property type="entry name" value="AAA"/>
    <property type="match status" value="1"/>
</dbReference>
<dbReference type="SUPFAM" id="SSF52540">
    <property type="entry name" value="P-loop containing nucleoside triphosphate hydrolases"/>
    <property type="match status" value="1"/>
</dbReference>
<dbReference type="SUPFAM" id="SSF54211">
    <property type="entry name" value="Ribosomal protein S5 domain 2-like"/>
    <property type="match status" value="1"/>
</dbReference>
<dbReference type="PROSITE" id="PS50162">
    <property type="entry name" value="RECA_2"/>
    <property type="match status" value="1"/>
</dbReference>
<protein>
    <recommendedName>
        <fullName evidence="1">DNA repair protein RadA</fullName>
        <ecNumber evidence="1">3.6.4.-</ecNumber>
    </recommendedName>
    <alternativeName>
        <fullName evidence="1">Branch migration protein RadA</fullName>
    </alternativeName>
</protein>
<evidence type="ECO:0000255" key="1">
    <source>
        <dbReference type="HAMAP-Rule" id="MF_01498"/>
    </source>
</evidence>
<name>RADA_CHLTR</name>
<comment type="function">
    <text evidence="1">DNA-dependent ATPase involved in processing of recombination intermediates, plays a role in repairing DNA breaks. Stimulates the branch migration of RecA-mediated strand transfer reactions, allowing the 3' invading strand to extend heteroduplex DNA faster. Binds ssDNA in the presence of ADP but not other nucleotides, has ATPase activity that is stimulated by ssDNA and various branched DNA structures, but inhibited by SSB. Does not have RecA's homology-searching function.</text>
</comment>
<comment type="domain">
    <text evidence="1">Has a putative N-terminal zinc-finger, a middle region with homology to RecA with ATPase motifs including the RadA KNRFG motif, while the C-terminus is homologous to Lon protease.</text>
</comment>
<comment type="similarity">
    <text evidence="1">Belongs to the RecA family. RadA subfamily.</text>
</comment>